<organism>
    <name type="scientific">Helicobacter pylori (strain ATCC 700392 / 26695)</name>
    <name type="common">Campylobacter pylori</name>
    <dbReference type="NCBI Taxonomy" id="85962"/>
    <lineage>
        <taxon>Bacteria</taxon>
        <taxon>Pseudomonadati</taxon>
        <taxon>Campylobacterota</taxon>
        <taxon>Epsilonproteobacteria</taxon>
        <taxon>Campylobacterales</taxon>
        <taxon>Helicobacteraceae</taxon>
        <taxon>Helicobacter</taxon>
    </lineage>
</organism>
<name>RL1_HELPY</name>
<proteinExistence type="evidence at protein level"/>
<gene>
    <name evidence="1" type="primary">rplA</name>
    <name type="ordered locus">HP_1201</name>
</gene>
<comment type="function">
    <text evidence="1">Binds directly to 23S rRNA. The L1 stalk is quite mobile in the ribosome, and is involved in E site tRNA release.</text>
</comment>
<comment type="function">
    <text evidence="1">Protein L1 is also a translational repressor protein, it controls the translation of the L11 operon by binding to its mRNA.</text>
</comment>
<comment type="function">
    <text>Peptides originating from the N-terminal end of L1 have antibacterial activity against bacteria such as E.coli and B.megaterium and modest antifungal activities. Has no effect on H.pylori itself. Peptides are not hemolytic against mammalian cells. These peptides may be released in the stomach during altruistic lysis to kill other fast growing bacteria.</text>
</comment>
<comment type="subunit">
    <text>Part of the 50S ribosomal subunit.</text>
</comment>
<comment type="miscellaneous">
    <text>The antimicrobial peptide HP (2-20) forms a short alpha-helix. Increasing the amphiphilicity of the helix increases its antimicrobial activities.</text>
</comment>
<comment type="similarity">
    <text evidence="1">Belongs to the universal ribosomal protein uL1 family.</text>
</comment>
<dbReference type="EMBL" id="AE000511">
    <property type="protein sequence ID" value="AAD08247.1"/>
    <property type="molecule type" value="Genomic_DNA"/>
</dbReference>
<dbReference type="EMBL" id="U86609">
    <property type="protein sequence ID" value="AAB47277.1"/>
    <property type="molecule type" value="Genomic_DNA"/>
</dbReference>
<dbReference type="PIR" id="A64670">
    <property type="entry name" value="A64670"/>
</dbReference>
<dbReference type="RefSeq" id="NP_207992.1">
    <property type="nucleotide sequence ID" value="NC_000915.1"/>
</dbReference>
<dbReference type="RefSeq" id="WP_001085839.1">
    <property type="nucleotide sequence ID" value="NC_018939.1"/>
</dbReference>
<dbReference type="PDB" id="1OT0">
    <property type="method" value="NMR"/>
    <property type="chains" value="A=2-18"/>
</dbReference>
<dbReference type="PDB" id="1P0G">
    <property type="method" value="NMR"/>
    <property type="chains" value="A=2-20"/>
</dbReference>
<dbReference type="PDB" id="1P0J">
    <property type="method" value="NMR"/>
    <property type="chains" value="A=2-18"/>
</dbReference>
<dbReference type="PDB" id="1P0L">
    <property type="method" value="NMR"/>
    <property type="chains" value="A=2-20"/>
</dbReference>
<dbReference type="PDB" id="1P0O">
    <property type="method" value="NMR"/>
    <property type="chains" value="A=2-20"/>
</dbReference>
<dbReference type="PDB" id="1P5K">
    <property type="method" value="NMR"/>
    <property type="chains" value="A=2-20"/>
</dbReference>
<dbReference type="PDB" id="1P5L">
    <property type="method" value="NMR"/>
    <property type="chains" value="A=7-20"/>
</dbReference>
<dbReference type="PDBsum" id="1OT0"/>
<dbReference type="PDBsum" id="1P0G"/>
<dbReference type="PDBsum" id="1P0J"/>
<dbReference type="PDBsum" id="1P0L"/>
<dbReference type="PDBsum" id="1P0O"/>
<dbReference type="PDBsum" id="1P5K"/>
<dbReference type="PDBsum" id="1P5L"/>
<dbReference type="SMR" id="P56029"/>
<dbReference type="FunCoup" id="P56029">
    <property type="interactions" value="433"/>
</dbReference>
<dbReference type="STRING" id="85962.HP_1201"/>
<dbReference type="PaxDb" id="85962-C694_06215"/>
<dbReference type="EnsemblBacteria" id="AAD08247">
    <property type="protein sequence ID" value="AAD08247"/>
    <property type="gene ID" value="HP_1201"/>
</dbReference>
<dbReference type="KEGG" id="heo:C694_06215"/>
<dbReference type="KEGG" id="hpy:HP_1201"/>
<dbReference type="PATRIC" id="fig|85962.47.peg.1291"/>
<dbReference type="eggNOG" id="COG0081">
    <property type="taxonomic scope" value="Bacteria"/>
</dbReference>
<dbReference type="InParanoid" id="P56029"/>
<dbReference type="OrthoDB" id="9803740at2"/>
<dbReference type="PhylomeDB" id="P56029"/>
<dbReference type="EvolutionaryTrace" id="P56029"/>
<dbReference type="Proteomes" id="UP000000429">
    <property type="component" value="Chromosome"/>
</dbReference>
<dbReference type="GO" id="GO:0022625">
    <property type="term" value="C:cytosolic large ribosomal subunit"/>
    <property type="evidence" value="ECO:0000318"/>
    <property type="project" value="GO_Central"/>
</dbReference>
<dbReference type="GO" id="GO:0019843">
    <property type="term" value="F:rRNA binding"/>
    <property type="evidence" value="ECO:0007669"/>
    <property type="project" value="UniProtKB-UniRule"/>
</dbReference>
<dbReference type="GO" id="GO:0003735">
    <property type="term" value="F:structural constituent of ribosome"/>
    <property type="evidence" value="ECO:0007669"/>
    <property type="project" value="InterPro"/>
</dbReference>
<dbReference type="GO" id="GO:0000049">
    <property type="term" value="F:tRNA binding"/>
    <property type="evidence" value="ECO:0007669"/>
    <property type="project" value="UniProtKB-KW"/>
</dbReference>
<dbReference type="GO" id="GO:0042742">
    <property type="term" value="P:defense response to bacterium"/>
    <property type="evidence" value="ECO:0007669"/>
    <property type="project" value="UniProtKB-KW"/>
</dbReference>
<dbReference type="GO" id="GO:0006417">
    <property type="term" value="P:regulation of translation"/>
    <property type="evidence" value="ECO:0007669"/>
    <property type="project" value="UniProtKB-KW"/>
</dbReference>
<dbReference type="GO" id="GO:0006412">
    <property type="term" value="P:translation"/>
    <property type="evidence" value="ECO:0007669"/>
    <property type="project" value="UniProtKB-UniRule"/>
</dbReference>
<dbReference type="CDD" id="cd00403">
    <property type="entry name" value="Ribosomal_L1"/>
    <property type="match status" value="1"/>
</dbReference>
<dbReference type="FunFam" id="3.40.50.790:FF:000001">
    <property type="entry name" value="50S ribosomal protein L1"/>
    <property type="match status" value="1"/>
</dbReference>
<dbReference type="Gene3D" id="3.30.190.20">
    <property type="match status" value="1"/>
</dbReference>
<dbReference type="Gene3D" id="3.40.50.790">
    <property type="match status" value="1"/>
</dbReference>
<dbReference type="HAMAP" id="MF_01318_B">
    <property type="entry name" value="Ribosomal_uL1_B"/>
    <property type="match status" value="1"/>
</dbReference>
<dbReference type="InterPro" id="IPR005878">
    <property type="entry name" value="Ribosom_uL1_bac-type"/>
</dbReference>
<dbReference type="InterPro" id="IPR002143">
    <property type="entry name" value="Ribosomal_uL1"/>
</dbReference>
<dbReference type="InterPro" id="IPR023674">
    <property type="entry name" value="Ribosomal_uL1-like"/>
</dbReference>
<dbReference type="InterPro" id="IPR028364">
    <property type="entry name" value="Ribosomal_uL1/biogenesis"/>
</dbReference>
<dbReference type="InterPro" id="IPR016095">
    <property type="entry name" value="Ribosomal_uL1_3-a/b-sand"/>
</dbReference>
<dbReference type="InterPro" id="IPR023673">
    <property type="entry name" value="Ribosomal_uL1_CS"/>
</dbReference>
<dbReference type="NCBIfam" id="TIGR01169">
    <property type="entry name" value="rplA_bact"/>
    <property type="match status" value="1"/>
</dbReference>
<dbReference type="PANTHER" id="PTHR36427">
    <property type="entry name" value="54S RIBOSOMAL PROTEIN L1, MITOCHONDRIAL"/>
    <property type="match status" value="1"/>
</dbReference>
<dbReference type="PANTHER" id="PTHR36427:SF3">
    <property type="entry name" value="LARGE RIBOSOMAL SUBUNIT PROTEIN UL1M"/>
    <property type="match status" value="1"/>
</dbReference>
<dbReference type="Pfam" id="PF00687">
    <property type="entry name" value="Ribosomal_L1"/>
    <property type="match status" value="1"/>
</dbReference>
<dbReference type="PIRSF" id="PIRSF002155">
    <property type="entry name" value="Ribosomal_L1"/>
    <property type="match status" value="1"/>
</dbReference>
<dbReference type="SUPFAM" id="SSF56808">
    <property type="entry name" value="Ribosomal protein L1"/>
    <property type="match status" value="1"/>
</dbReference>
<dbReference type="PROSITE" id="PS01199">
    <property type="entry name" value="RIBOSOMAL_L1"/>
    <property type="match status" value="1"/>
</dbReference>
<feature type="chain" id="PRO_0000125667" description="Large ribosomal subunit protein uL1">
    <location>
        <begin position="1"/>
        <end position="234"/>
    </location>
</feature>
<feature type="sequence variant" description="In strain: Hp921023.">
    <original>S</original>
    <variation>T</variation>
    <location>
        <position position="155"/>
    </location>
</feature>
<feature type="mutagenesis site" description="Increases antibacterial and antifungal activities 2-4 fold without an increase in hemolytic activities." evidence="2">
    <original>QND</original>
    <variation>WNW</variation>
    <location>
        <begin position="17"/>
        <end position="19"/>
    </location>
</feature>
<feature type="helix" evidence="4">
    <location>
        <begin position="6"/>
        <end position="19"/>
    </location>
</feature>
<reference key="1">
    <citation type="journal article" date="1997" name="Nature">
        <title>The complete genome sequence of the gastric pathogen Helicobacter pylori.</title>
        <authorList>
            <person name="Tomb J.-F."/>
            <person name="White O."/>
            <person name="Kerlavage A.R."/>
            <person name="Clayton R.A."/>
            <person name="Sutton G.G."/>
            <person name="Fleischmann R.D."/>
            <person name="Ketchum K.A."/>
            <person name="Klenk H.-P."/>
            <person name="Gill S.R."/>
            <person name="Dougherty B.A."/>
            <person name="Nelson K.E."/>
            <person name="Quackenbush J."/>
            <person name="Zhou L."/>
            <person name="Kirkness E.F."/>
            <person name="Peterson S.N."/>
            <person name="Loftus B.J."/>
            <person name="Richardson D.L."/>
            <person name="Dodson R.J."/>
            <person name="Khalak H.G."/>
            <person name="Glodek A."/>
            <person name="McKenney K."/>
            <person name="FitzGerald L.M."/>
            <person name="Lee N."/>
            <person name="Adams M.D."/>
            <person name="Hickey E.K."/>
            <person name="Berg D.E."/>
            <person name="Gocayne J.D."/>
            <person name="Utterback T.R."/>
            <person name="Peterson J.D."/>
            <person name="Kelley J.M."/>
            <person name="Cotton M.D."/>
            <person name="Weidman J.F."/>
            <person name="Fujii C."/>
            <person name="Bowman C."/>
            <person name="Watthey L."/>
            <person name="Wallin E."/>
            <person name="Hayes W.S."/>
            <person name="Borodovsky M."/>
            <person name="Karp P.D."/>
            <person name="Smith H.O."/>
            <person name="Fraser C.M."/>
            <person name="Venter J.C."/>
        </authorList>
    </citation>
    <scope>NUCLEOTIDE SEQUENCE [LARGE SCALE GENOMIC DNA]</scope>
    <source>
        <strain>ATCC 700392 / 26695</strain>
    </source>
</reference>
<reference key="2">
    <citation type="journal article" date="1999" name="Infect. Immun.">
        <title>Isolation of recombinant protective Helicobacter pylori antigens.</title>
        <authorList>
            <person name="Hocking D."/>
            <person name="Webb E."/>
            <person name="Radcliff F."/>
            <person name="Rothel L."/>
            <person name="Taylor S."/>
            <person name="Pinczower G."/>
            <person name="Kapouleas C."/>
            <person name="Braley H."/>
            <person name="Lee A."/>
            <person name="Doidge C."/>
        </authorList>
    </citation>
    <scope>NUCLEOTIDE SEQUENCE [GENOMIC DNA] OF 57-234</scope>
    <source>
        <strain>Hp921023</strain>
    </source>
</reference>
<reference key="3">
    <citation type="journal article" date="1999" name="Nature">
        <title>Antibacterial peptide from H. pylori.</title>
        <authorList>
            <person name="Putsep K."/>
            <person name="Branden C.I."/>
            <person name="Boman H.G."/>
            <person name="Normark S."/>
        </authorList>
    </citation>
    <scope>SYNTHESIS</scope>
    <scope>ANTIBACTERIAL ACTIVITY OF 2-20 AND 22-38</scope>
</reference>
<reference key="4">
    <citation type="submission" date="2004-09" db="PDB data bank">
        <title>Structure of antimicrobial peptide, HP (2-20) and its analogues derived from Helicobacter pylori, as determined by 1H NMR spectroscopy.</title>
        <authorList>
            <person name="Lee K.H."/>
            <person name="Lee D.G."/>
            <person name="Park Y."/>
            <person name="Hahm K.-S."/>
            <person name="Kim Y."/>
        </authorList>
    </citation>
    <scope>STRUCTURE BY NMR OF 2-20</scope>
</reference>
<reference key="5">
    <citation type="journal article" date="2006" name="Biochem. J.">
        <title>Interactions between the plasma membrane and the antimicrobial peptide HP (2-20) and its analogues derived from Helicobacter pylori.</title>
        <authorList>
            <person name="Lee K.H."/>
            <person name="Lee D.G."/>
            <person name="Park Y."/>
            <person name="Kang D.-I."/>
            <person name="Shin S.Y."/>
            <person name="Hahm K.-S."/>
            <person name="Kim Y."/>
        </authorList>
    </citation>
    <scope>STRUCTURE BY NMR OF 2-20</scope>
    <scope>ANTIFUNGAL ACTIVITY</scope>
    <scope>LYSIS MECHANISM</scope>
    <scope>MUTAGENESIS OF 17-GLN--ASP-19</scope>
</reference>
<accession>P56029</accession>
<accession>P94849</accession>
<evidence type="ECO:0000255" key="1">
    <source>
        <dbReference type="HAMAP-Rule" id="MF_01318"/>
    </source>
</evidence>
<evidence type="ECO:0000269" key="2">
    <source>
    </source>
</evidence>
<evidence type="ECO:0000305" key="3"/>
<evidence type="ECO:0007829" key="4">
    <source>
        <dbReference type="PDB" id="1OT0"/>
    </source>
</evidence>
<keyword id="KW-0002">3D-structure</keyword>
<keyword id="KW-0044">Antibiotic</keyword>
<keyword id="KW-0929">Antimicrobial</keyword>
<keyword id="KW-1185">Reference proteome</keyword>
<keyword id="KW-0678">Repressor</keyword>
<keyword id="KW-0687">Ribonucleoprotein</keyword>
<keyword id="KW-0689">Ribosomal protein</keyword>
<keyword id="KW-0694">RNA-binding</keyword>
<keyword id="KW-0699">rRNA-binding</keyword>
<keyword id="KW-0810">Translation regulation</keyword>
<keyword id="KW-0820">tRNA-binding</keyword>
<protein>
    <recommendedName>
        <fullName evidence="1">Large ribosomal subunit protein uL1</fullName>
    </recommendedName>
    <alternativeName>
        <fullName evidence="3">50S ribosomal protein L1</fullName>
    </alternativeName>
</protein>
<sequence>MAKKVFKRLEKLFSKIQNDKAYGVEQGVEVVKSLASAKFDETVEVALRLGVDPRHADQMVRGAVVLPHGTGKKVRVAVFAKDIKQDEAKNAGADVVGGDDLAEEIKNGRIDFDMVIATPDMMAVVGKVGRILGPKGLMPNPKTGTVTMDIAKAVSNAKSGQVNFRVDKKGNVHAPIGKASFPEEKIKENMLELVKTINRLKPSSAKGKYIRNAALSLTMSPSVSLDAQELMDIK</sequence>